<sequence>MADKRKLQGEIDRCLKKVSEGVEQFEDIWQKLHNAANANQKEKYEADLKKEIKKLQRLRDQIKTWVASNEIKDKRQLIDNRKLIETQMERFKVVERETKTKAYSKEGLGLAQKVDPAQKEKEEVGQWLTNTIDTLNMQVDQFESEVESLSVQTRKKKGDKDKQDRIEGLKRHIEKHRYHVRMLETILRMLDNDSILVDAIRKIKDDVEYYVDSSQDPDFEENEFLYDDLDLEDIPQALVATSPPSHSHMEDEIFNQSSSTPTSTTSSSPIPPSPANCTTENSEDDKKRGRSTDSEVSQSPAKNGSKPVHSNQHPQSPAVPPTYPSGPPPAASALSTTPGNNGVPAPAAPPSALGPKASPAPSHNSGTPAPYAQAVAPPAPSGPSTTQPRPPSVQPSGGGGGGSGGGGSSSSSNSSAGGGAGKQNGATSYSSVVADSPAEVALSSSGGNNASSQALGPPSGPHNPPPSTSKEPSAAAPTGAGGVAPGSGNNSGGPSLLVPLPVNPPSSPTPSFSDAKAAGALLNGPPQFSTAPEIKAPEPLSSLKSMAERAAISSGIEDPVPTLHLTERDIILSSTSAPPASAQPPLQLSEVNIPLSLGVCPLGPVPLTKEQLYQQAMEEAAWHHMPHPSDSERIRQYLPRNPCPTPPYHHQMPPPHSDTVEFYQRLSTETLFFIFYYLEGTKAQYLAAKALKKQSWRFHTKYMMWFQRHEEPKTITDEFEQGTYIYFDYEKWGQRKKEGFTFEYRYLEDRDLQ</sequence>
<organism>
    <name type="scientific">Homo sapiens</name>
    <name type="common">Human</name>
    <dbReference type="NCBI Taxonomy" id="9606"/>
    <lineage>
        <taxon>Eukaryota</taxon>
        <taxon>Metazoa</taxon>
        <taxon>Chordata</taxon>
        <taxon>Craniata</taxon>
        <taxon>Vertebrata</taxon>
        <taxon>Euteleostomi</taxon>
        <taxon>Mammalia</taxon>
        <taxon>Eutheria</taxon>
        <taxon>Euarchontoglires</taxon>
        <taxon>Primates</taxon>
        <taxon>Haplorrhini</taxon>
        <taxon>Catarrhini</taxon>
        <taxon>Hominidae</taxon>
        <taxon>Homo</taxon>
    </lineage>
</organism>
<feature type="chain" id="PRO_0000198333" description="CCR4-NOT transcription complex subunit 3">
    <location>
        <begin position="1"/>
        <end position="753"/>
    </location>
</feature>
<feature type="region of interest" description="Disordered" evidence="3">
    <location>
        <begin position="240"/>
        <end position="534"/>
    </location>
</feature>
<feature type="region of interest" description="Repressor domain">
    <location>
        <begin position="661"/>
        <end position="753"/>
    </location>
</feature>
<feature type="compositionally biased region" description="Low complexity" evidence="3">
    <location>
        <begin position="257"/>
        <end position="268"/>
    </location>
</feature>
<feature type="compositionally biased region" description="Basic and acidic residues" evidence="3">
    <location>
        <begin position="284"/>
        <end position="293"/>
    </location>
</feature>
<feature type="compositionally biased region" description="Polar residues" evidence="3">
    <location>
        <begin position="294"/>
        <end position="315"/>
    </location>
</feature>
<feature type="compositionally biased region" description="Pro residues" evidence="3">
    <location>
        <begin position="317"/>
        <end position="330"/>
    </location>
</feature>
<feature type="compositionally biased region" description="Low complexity" evidence="3">
    <location>
        <begin position="350"/>
        <end position="376"/>
    </location>
</feature>
<feature type="compositionally biased region" description="Gly residues" evidence="3">
    <location>
        <begin position="396"/>
        <end position="408"/>
    </location>
</feature>
<feature type="compositionally biased region" description="Polar residues" evidence="3">
    <location>
        <begin position="424"/>
        <end position="433"/>
    </location>
</feature>
<feature type="compositionally biased region" description="Low complexity" evidence="3">
    <location>
        <begin position="441"/>
        <end position="457"/>
    </location>
</feature>
<feature type="compositionally biased region" description="Pro residues" evidence="3">
    <location>
        <begin position="458"/>
        <end position="467"/>
    </location>
</feature>
<feature type="compositionally biased region" description="Gly residues" evidence="3">
    <location>
        <begin position="479"/>
        <end position="491"/>
    </location>
</feature>
<feature type="modified residue" description="Phosphothreonine" evidence="15">
    <location>
        <position position="292"/>
    </location>
</feature>
<feature type="modified residue" description="Phosphoserine" evidence="16">
    <location>
        <position position="299"/>
    </location>
</feature>
<feature type="modified residue" description="Phosphoserine" evidence="17">
    <location>
        <position position="542"/>
    </location>
</feature>
<feature type="sequence variant" id="VAR_083405" description="In IDDSADF." evidence="12">
    <original>E</original>
    <variation>Q</variation>
    <location>
        <position position="20"/>
    </location>
</feature>
<feature type="sequence variant" id="VAR_083406" description="In IDDSADF." evidence="12">
    <original>L</original>
    <variation>V</variation>
    <location>
        <position position="48"/>
    </location>
</feature>
<feature type="sequence variant" id="VAR_083407" description="In IDDSADF; uncertain significance." evidence="12">
    <original>K</original>
    <variation>E</variation>
    <location>
        <position position="119"/>
    </location>
</feature>
<feature type="sequence variant" id="VAR_083408" description="In IDDSADF; uncertain significance." evidence="12">
    <original>E</original>
    <variation>K</variation>
    <location>
        <position position="147"/>
    </location>
</feature>
<feature type="sequence variant" id="VAR_083409" description="In IDDSADF." evidence="12">
    <original>R</original>
    <variation>C</variation>
    <location>
        <position position="188"/>
    </location>
</feature>
<feature type="sequence variant" id="VAR_083410" description="In IDDSADF." evidence="12">
    <original>R</original>
    <variation>H</variation>
    <location>
        <position position="188"/>
    </location>
</feature>
<feature type="sequence variant" id="VAR_083411" description="In IDDSADF." evidence="12">
    <location>
        <begin position="622"/>
        <end position="753"/>
    </location>
</feature>
<feature type="sequence variant" id="VAR_083412" description="In IDDSADF." evidence="12">
    <location>
        <begin position="694"/>
        <end position="753"/>
    </location>
</feature>
<feature type="sequence variant" id="VAR_083413" description="In IDDSADF; uncertain significance." evidence="12">
    <original>R</original>
    <variation>Q</variation>
    <location>
        <position position="697"/>
    </location>
</feature>
<feature type="helix" evidence="20">
    <location>
        <begin position="2"/>
        <end position="33"/>
    </location>
</feature>
<feature type="helix" evidence="20">
    <location>
        <begin position="38"/>
        <end position="67"/>
    </location>
</feature>
<feature type="strand" evidence="20">
    <location>
        <begin position="68"/>
        <end position="70"/>
    </location>
</feature>
<feature type="helix" evidence="20">
    <location>
        <begin position="75"/>
        <end position="99"/>
    </location>
</feature>
<feature type="helix" evidence="20">
    <location>
        <begin position="105"/>
        <end position="108"/>
    </location>
</feature>
<feature type="helix" evidence="20">
    <location>
        <begin position="116"/>
        <end position="156"/>
    </location>
</feature>
<feature type="helix" evidence="20">
    <location>
        <begin position="160"/>
        <end position="191"/>
    </location>
</feature>
<feature type="helix" evidence="20">
    <location>
        <begin position="197"/>
        <end position="212"/>
    </location>
</feature>
<feature type="strand" evidence="20">
    <location>
        <begin position="213"/>
        <end position="218"/>
    </location>
</feature>
<feature type="turn" evidence="20">
    <location>
        <begin position="227"/>
        <end position="230"/>
    </location>
</feature>
<feature type="helix" evidence="19">
    <location>
        <begin position="609"/>
        <end position="623"/>
    </location>
</feature>
<feature type="helix" evidence="19">
    <location>
        <begin position="628"/>
        <end position="631"/>
    </location>
</feature>
<feature type="strand" evidence="19">
    <location>
        <begin position="636"/>
        <end position="638"/>
    </location>
</feature>
<feature type="turn" evidence="19">
    <location>
        <begin position="655"/>
        <end position="658"/>
    </location>
</feature>
<feature type="helix" evidence="18">
    <location>
        <begin position="660"/>
        <end position="665"/>
    </location>
</feature>
<feature type="helix" evidence="18">
    <location>
        <begin position="668"/>
        <end position="677"/>
    </location>
</feature>
<feature type="turn" evidence="19">
    <location>
        <begin position="678"/>
        <end position="680"/>
    </location>
</feature>
<feature type="helix" evidence="18">
    <location>
        <begin position="682"/>
        <end position="693"/>
    </location>
</feature>
<feature type="strand" evidence="18">
    <location>
        <begin position="697"/>
        <end position="699"/>
    </location>
</feature>
<feature type="turn" evidence="18">
    <location>
        <begin position="700"/>
        <end position="703"/>
    </location>
</feature>
<feature type="strand" evidence="18">
    <location>
        <begin position="704"/>
        <end position="710"/>
    </location>
</feature>
<feature type="strand" evidence="18">
    <location>
        <begin position="713"/>
        <end position="715"/>
    </location>
</feature>
<feature type="strand" evidence="18">
    <location>
        <begin position="717"/>
        <end position="728"/>
    </location>
</feature>
<feature type="turn" evidence="18">
    <location>
        <begin position="729"/>
        <end position="732"/>
    </location>
</feature>
<feature type="strand" evidence="18">
    <location>
        <begin position="733"/>
        <end position="743"/>
    </location>
</feature>
<feature type="helix" evidence="18">
    <location>
        <begin position="744"/>
        <end position="746"/>
    </location>
</feature>
<dbReference type="EMBL" id="AB014591">
    <property type="protein sequence ID" value="BAA31666.2"/>
    <property type="status" value="ALT_INIT"/>
    <property type="molecule type" value="mRNA"/>
</dbReference>
<dbReference type="EMBL" id="BC016474">
    <property type="protein sequence ID" value="AAH16474.1"/>
    <property type="molecule type" value="mRNA"/>
</dbReference>
<dbReference type="EMBL" id="AF180474">
    <property type="protein sequence ID" value="AAF29828.1"/>
    <property type="status" value="ALT_SEQ"/>
    <property type="molecule type" value="mRNA"/>
</dbReference>
<dbReference type="EMBL" id="AL133647">
    <property type="protein sequence ID" value="CAB63766.1"/>
    <property type="status" value="ALT_SEQ"/>
    <property type="molecule type" value="mRNA"/>
</dbReference>
<dbReference type="CCDS" id="CCDS12880.1"/>
<dbReference type="PIR" id="T43456">
    <property type="entry name" value="T43456"/>
</dbReference>
<dbReference type="RefSeq" id="NP_055331.1">
    <property type="nucleotide sequence ID" value="NM_014516.4"/>
</dbReference>
<dbReference type="RefSeq" id="XP_047294831.1">
    <property type="nucleotide sequence ID" value="XM_047438875.1"/>
</dbReference>
<dbReference type="RefSeq" id="XP_047294832.1">
    <property type="nucleotide sequence ID" value="XM_047438876.1"/>
</dbReference>
<dbReference type="RefSeq" id="XP_047294833.1">
    <property type="nucleotide sequence ID" value="XM_047438877.1"/>
</dbReference>
<dbReference type="RefSeq" id="XP_047294834.1">
    <property type="nucleotide sequence ID" value="XM_047438878.1"/>
</dbReference>
<dbReference type="RefSeq" id="XP_047294835.1">
    <property type="nucleotide sequence ID" value="XM_047438879.1"/>
</dbReference>
<dbReference type="RefSeq" id="XP_054177071.1">
    <property type="nucleotide sequence ID" value="XM_054321096.1"/>
</dbReference>
<dbReference type="RefSeq" id="XP_054177072.1">
    <property type="nucleotide sequence ID" value="XM_054321097.1"/>
</dbReference>
<dbReference type="RefSeq" id="XP_054177073.1">
    <property type="nucleotide sequence ID" value="XM_054321098.1"/>
</dbReference>
<dbReference type="RefSeq" id="XP_054177074.1">
    <property type="nucleotide sequence ID" value="XM_054321099.1"/>
</dbReference>
<dbReference type="RefSeq" id="XP_054177075.1">
    <property type="nucleotide sequence ID" value="XM_054321100.1"/>
</dbReference>
<dbReference type="RefSeq" id="XP_054185670.1">
    <property type="nucleotide sequence ID" value="XM_054329695.1"/>
</dbReference>
<dbReference type="RefSeq" id="XP_054185671.1">
    <property type="nucleotide sequence ID" value="XM_054329696.1"/>
</dbReference>
<dbReference type="RefSeq" id="XP_054185672.1">
    <property type="nucleotide sequence ID" value="XM_054329697.1"/>
</dbReference>
<dbReference type="RefSeq" id="XP_054185673.1">
    <property type="nucleotide sequence ID" value="XM_054329698.1"/>
</dbReference>
<dbReference type="RefSeq" id="XP_054186167.1">
    <property type="nucleotide sequence ID" value="XM_054330192.1"/>
</dbReference>
<dbReference type="RefSeq" id="XP_054186168.1">
    <property type="nucleotide sequence ID" value="XM_054330193.1"/>
</dbReference>
<dbReference type="RefSeq" id="XP_054186169.1">
    <property type="nucleotide sequence ID" value="XM_054330194.1"/>
</dbReference>
<dbReference type="RefSeq" id="XP_054186170.1">
    <property type="nucleotide sequence ID" value="XM_054330195.1"/>
</dbReference>
<dbReference type="RefSeq" id="XP_054186465.1">
    <property type="nucleotide sequence ID" value="XM_054330490.1"/>
</dbReference>
<dbReference type="RefSeq" id="XP_054186466.1">
    <property type="nucleotide sequence ID" value="XM_054330491.1"/>
</dbReference>
<dbReference type="RefSeq" id="XP_054186467.1">
    <property type="nucleotide sequence ID" value="XM_054330492.1"/>
</dbReference>
<dbReference type="RefSeq" id="XP_054186715.1">
    <property type="nucleotide sequence ID" value="XM_054330740.1"/>
</dbReference>
<dbReference type="RefSeq" id="XP_054186716.1">
    <property type="nucleotide sequence ID" value="XM_054330741.1"/>
</dbReference>
<dbReference type="RefSeq" id="XP_054186717.1">
    <property type="nucleotide sequence ID" value="XM_054330742.1"/>
</dbReference>
<dbReference type="RefSeq" id="XP_054186718.1">
    <property type="nucleotide sequence ID" value="XM_054330743.1"/>
</dbReference>
<dbReference type="RefSeq" id="XP_054186945.1">
    <property type="nucleotide sequence ID" value="XM_054330970.1"/>
</dbReference>
<dbReference type="RefSeq" id="XP_054186946.1">
    <property type="nucleotide sequence ID" value="XM_054330971.1"/>
</dbReference>
<dbReference type="RefSeq" id="XP_054186947.1">
    <property type="nucleotide sequence ID" value="XM_054330972.1"/>
</dbReference>
<dbReference type="RefSeq" id="XP_054186948.1">
    <property type="nucleotide sequence ID" value="XM_054330973.1"/>
</dbReference>
<dbReference type="RefSeq" id="XP_054187228.1">
    <property type="nucleotide sequence ID" value="XM_054331253.1"/>
</dbReference>
<dbReference type="RefSeq" id="XP_054187229.1">
    <property type="nucleotide sequence ID" value="XM_054331254.1"/>
</dbReference>
<dbReference type="RefSeq" id="XP_054187230.1">
    <property type="nucleotide sequence ID" value="XM_054331255.1"/>
</dbReference>
<dbReference type="RefSeq" id="XP_054187501.1">
    <property type="nucleotide sequence ID" value="XM_054331526.1"/>
</dbReference>
<dbReference type="RefSeq" id="XP_054187502.1">
    <property type="nucleotide sequence ID" value="XM_054331527.1"/>
</dbReference>
<dbReference type="RefSeq" id="XP_054187503.1">
    <property type="nucleotide sequence ID" value="XM_054331528.1"/>
</dbReference>
<dbReference type="RefSeq" id="XP_054189543.1">
    <property type="nucleotide sequence ID" value="XM_054333568.1"/>
</dbReference>
<dbReference type="RefSeq" id="XP_054189544.1">
    <property type="nucleotide sequence ID" value="XM_054333569.1"/>
</dbReference>
<dbReference type="RefSeq" id="XP_054189545.1">
    <property type="nucleotide sequence ID" value="XM_054333570.1"/>
</dbReference>
<dbReference type="RefSeq" id="XP_054189546.1">
    <property type="nucleotide sequence ID" value="XM_054333571.1"/>
</dbReference>
<dbReference type="RefSeq" id="XP_054189644.1">
    <property type="nucleotide sequence ID" value="XM_054333669.1"/>
</dbReference>
<dbReference type="RefSeq" id="XP_054189645.1">
    <property type="nucleotide sequence ID" value="XM_054333670.1"/>
</dbReference>
<dbReference type="RefSeq" id="XP_054189646.1">
    <property type="nucleotide sequence ID" value="XM_054333671.1"/>
</dbReference>
<dbReference type="RefSeq" id="XP_054189647.1">
    <property type="nucleotide sequence ID" value="XM_054333672.1"/>
</dbReference>
<dbReference type="PDB" id="4C0D">
    <property type="method" value="X-ray"/>
    <property type="resolution" value="3.20 A"/>
    <property type="chains" value="C=607-753"/>
</dbReference>
<dbReference type="PDB" id="4C0G">
    <property type="method" value="X-ray"/>
    <property type="resolution" value="2.40 A"/>
    <property type="chains" value="A/B/C/D/E/F=656-753"/>
</dbReference>
<dbReference type="PDB" id="5FU6">
    <property type="method" value="X-ray"/>
    <property type="resolution" value="2.90 A"/>
    <property type="chains" value="C/F=607-748"/>
</dbReference>
<dbReference type="PDB" id="5FU7">
    <property type="method" value="X-ray"/>
    <property type="resolution" value="3.10 A"/>
    <property type="chains" value="C/G=607-748"/>
</dbReference>
<dbReference type="PDB" id="9C3H">
    <property type="method" value="EM"/>
    <property type="resolution" value="2.00 A"/>
    <property type="chains" value="SB=1-607"/>
</dbReference>
<dbReference type="PDB" id="9C3I">
    <property type="method" value="EM"/>
    <property type="resolution" value="3.10 A"/>
    <property type="chains" value="S=1-607"/>
</dbReference>
<dbReference type="PDBsum" id="4C0D"/>
<dbReference type="PDBsum" id="4C0G"/>
<dbReference type="PDBsum" id="5FU6"/>
<dbReference type="PDBsum" id="5FU7"/>
<dbReference type="PDBsum" id="9C3H"/>
<dbReference type="PDBsum" id="9C3I"/>
<dbReference type="EMDB" id="EMD-45170"/>
<dbReference type="SMR" id="O75175"/>
<dbReference type="BioGRID" id="110911">
    <property type="interactions" value="178"/>
</dbReference>
<dbReference type="ComplexPortal" id="CPX-2522">
    <property type="entry name" value="CCR4-NOT mRNA deadenylase complex, CNOT6L-CNOT7 variant"/>
</dbReference>
<dbReference type="ComplexPortal" id="CPX-2535">
    <property type="entry name" value="CCR4-NOT mRNA deadenylase complex, CNOT6L-CNOT8 variant"/>
</dbReference>
<dbReference type="ComplexPortal" id="CPX-2849">
    <property type="entry name" value="CCR4-NOT mRNA deadenylase complex, CNOT6-CNOT8 variant"/>
</dbReference>
<dbReference type="ComplexPortal" id="CPX-707">
    <property type="entry name" value="CCR4-NOT mRNA deadenylase complex, CNOT6-CNOT7 variant"/>
</dbReference>
<dbReference type="CORUM" id="O75175"/>
<dbReference type="DIP" id="DIP-40297N"/>
<dbReference type="FunCoup" id="O75175">
    <property type="interactions" value="1459"/>
</dbReference>
<dbReference type="IntAct" id="O75175">
    <property type="interactions" value="97"/>
</dbReference>
<dbReference type="MINT" id="O75175"/>
<dbReference type="STRING" id="9606.ENSP00000351159"/>
<dbReference type="ChEMBL" id="CHEMBL4105769"/>
<dbReference type="GlyGen" id="O75175">
    <property type="glycosylation" value="5 sites, 1 N-linked glycan (1 site), 1 O-linked glycan (1 site)"/>
</dbReference>
<dbReference type="iPTMnet" id="O75175"/>
<dbReference type="PhosphoSitePlus" id="O75175"/>
<dbReference type="BioMuta" id="CNOT3"/>
<dbReference type="jPOST" id="O75175"/>
<dbReference type="MassIVE" id="O75175"/>
<dbReference type="PaxDb" id="9606-ENSP00000351159"/>
<dbReference type="PeptideAtlas" id="O75175"/>
<dbReference type="Pumba" id="O75175"/>
<dbReference type="Antibodypedia" id="1756">
    <property type="antibodies" value="256 antibodies from 28 providers"/>
</dbReference>
<dbReference type="DNASU" id="4849"/>
<dbReference type="Ensembl" id="ENST00000221232.11">
    <property type="protein sequence ID" value="ENSP00000221232.5"/>
    <property type="gene ID" value="ENSG00000088038.20"/>
</dbReference>
<dbReference type="Ensembl" id="ENST00000358389.7">
    <property type="protein sequence ID" value="ENSP00000351159.4"/>
    <property type="gene ID" value="ENSG00000088038.20"/>
</dbReference>
<dbReference type="Ensembl" id="ENST00000610883.4">
    <property type="protein sequence ID" value="ENSP00000480258.1"/>
    <property type="gene ID" value="ENSG00000274941.4"/>
</dbReference>
<dbReference type="Ensembl" id="ENST00000611252.4">
    <property type="protein sequence ID" value="ENSP00000483968.1"/>
    <property type="gene ID" value="ENSG00000275979.4"/>
</dbReference>
<dbReference type="Ensembl" id="ENST00000612924.4">
    <property type="protein sequence ID" value="ENSP00000480585.1"/>
    <property type="gene ID" value="ENSG00000274176.4"/>
</dbReference>
<dbReference type="Ensembl" id="ENST00000613528.4">
    <property type="protein sequence ID" value="ENSP00000483604.1"/>
    <property type="gene ID" value="ENSG00000277615.4"/>
</dbReference>
<dbReference type="Ensembl" id="ENST00000613752.4">
    <property type="protein sequence ID" value="ENSP00000481681.1"/>
    <property type="gene ID" value="ENSG00000273943.4"/>
</dbReference>
<dbReference type="Ensembl" id="ENST00000614649.4">
    <property type="protein sequence ID" value="ENSP00000484794.1"/>
    <property type="gene ID" value="ENSG00000274176.4"/>
</dbReference>
<dbReference type="Ensembl" id="ENST00000615030.2">
    <property type="protein sequence ID" value="ENSP00000480697.1"/>
    <property type="gene ID" value="ENSG00000274616.4"/>
</dbReference>
<dbReference type="Ensembl" id="ENST00000616359.3">
    <property type="protein sequence ID" value="ENSP00000484040.1"/>
    <property type="gene ID" value="ENSG00000274616.4"/>
</dbReference>
<dbReference type="Ensembl" id="ENST00000616910.4">
    <property type="protein sequence ID" value="ENSP00000480876.1"/>
    <property type="gene ID" value="ENSG00000277615.4"/>
</dbReference>
<dbReference type="Ensembl" id="ENST00000617982.4">
    <property type="protein sequence ID" value="ENSP00000479987.1"/>
    <property type="gene ID" value="ENSG00000277600.4"/>
</dbReference>
<dbReference type="Ensembl" id="ENST00000618405.4">
    <property type="protein sequence ID" value="ENSP00000481924.1"/>
    <property type="gene ID" value="ENSG00000277114.4"/>
</dbReference>
<dbReference type="Ensembl" id="ENST00000619567.4">
    <property type="protein sequence ID" value="ENSP00000483882.1"/>
    <property type="gene ID" value="ENSG00000275979.4"/>
</dbReference>
<dbReference type="Ensembl" id="ENST00000619854.4">
    <property type="protein sequence ID" value="ENSP00000483431.1"/>
    <property type="gene ID" value="ENSG00000273943.4"/>
</dbReference>
<dbReference type="Ensembl" id="ENST00000620060.1">
    <property type="protein sequence ID" value="ENSP00000483036.1"/>
    <property type="gene ID" value="ENSG00000277114.4"/>
</dbReference>
<dbReference type="Ensembl" id="ENST00000620419.4">
    <property type="protein sequence ID" value="ENSP00000478956.1"/>
    <property type="gene ID" value="ENSG00000276082.4"/>
</dbReference>
<dbReference type="Ensembl" id="ENST00000620573.4">
    <property type="protein sequence ID" value="ENSP00000480988.1"/>
    <property type="gene ID" value="ENSG00000276082.4"/>
</dbReference>
<dbReference type="Ensembl" id="ENST00000620970.4">
    <property type="protein sequence ID" value="ENSP00000483692.1"/>
    <property type="gene ID" value="ENSG00000277600.4"/>
</dbReference>
<dbReference type="Ensembl" id="ENST00000622131.4">
    <property type="protein sequence ID" value="ENSP00000478280.1"/>
    <property type="gene ID" value="ENSG00000274941.4"/>
</dbReference>
<dbReference type="GeneID" id="4849"/>
<dbReference type="KEGG" id="hsa:4849"/>
<dbReference type="MANE-Select" id="ENST00000221232.11">
    <property type="protein sequence ID" value="ENSP00000221232.5"/>
    <property type="RefSeq nucleotide sequence ID" value="NM_014516.4"/>
    <property type="RefSeq protein sequence ID" value="NP_055331.1"/>
</dbReference>
<dbReference type="UCSC" id="uc002qdj.3">
    <property type="organism name" value="human"/>
</dbReference>
<dbReference type="AGR" id="HGNC:7879"/>
<dbReference type="CTD" id="4849"/>
<dbReference type="DisGeNET" id="4849"/>
<dbReference type="GeneCards" id="CNOT3"/>
<dbReference type="HGNC" id="HGNC:7879">
    <property type="gene designation" value="CNOT3"/>
</dbReference>
<dbReference type="HPA" id="ENSG00000088038">
    <property type="expression patterns" value="Low tissue specificity"/>
</dbReference>
<dbReference type="MalaCards" id="CNOT3"/>
<dbReference type="MIM" id="604910">
    <property type="type" value="gene"/>
</dbReference>
<dbReference type="MIM" id="618672">
    <property type="type" value="phenotype"/>
</dbReference>
<dbReference type="neXtProt" id="NX_O75175"/>
<dbReference type="OpenTargets" id="ENSG00000088038"/>
<dbReference type="Orphanet" id="528084">
    <property type="disease" value="Non-specific syndromic intellectual disability"/>
</dbReference>
<dbReference type="Orphanet" id="99861">
    <property type="disease" value="Precursor T-cell acute lymphoblastic leukemia"/>
</dbReference>
<dbReference type="PharmGKB" id="PA26674"/>
<dbReference type="VEuPathDB" id="HostDB:ENSG00000088038"/>
<dbReference type="eggNOG" id="KOG2150">
    <property type="taxonomic scope" value="Eukaryota"/>
</dbReference>
<dbReference type="GeneTree" id="ENSGT00390000014743"/>
<dbReference type="HOGENOM" id="CLU_013819_1_1_1"/>
<dbReference type="InParanoid" id="O75175"/>
<dbReference type="OrthoDB" id="293823at2759"/>
<dbReference type="PAN-GO" id="O75175">
    <property type="GO annotations" value="4 GO annotations based on evolutionary models"/>
</dbReference>
<dbReference type="PhylomeDB" id="O75175"/>
<dbReference type="TreeFam" id="TF321963"/>
<dbReference type="PathwayCommons" id="O75175"/>
<dbReference type="Reactome" id="R-HSA-429947">
    <property type="pathway name" value="Deadenylation of mRNA"/>
</dbReference>
<dbReference type="Reactome" id="R-HSA-6804115">
    <property type="pathway name" value="TP53 regulates transcription of additional cell cycle genes whose exact role in the p53 pathway remain uncertain"/>
</dbReference>
<dbReference type="Reactome" id="R-HSA-9820841">
    <property type="pathway name" value="M-decay: degradation of maternal mRNAs by maternally stored factors"/>
</dbReference>
<dbReference type="SignaLink" id="O75175"/>
<dbReference type="SIGNOR" id="O75175"/>
<dbReference type="BioGRID-ORCS" id="4849">
    <property type="hits" value="748 hits in 1163 CRISPR screens"/>
</dbReference>
<dbReference type="CD-CODE" id="232F8A39">
    <property type="entry name" value="P-body"/>
</dbReference>
<dbReference type="CD-CODE" id="DEE660B4">
    <property type="entry name" value="Stress granule"/>
</dbReference>
<dbReference type="ChiTaRS" id="CNOT3">
    <property type="organism name" value="human"/>
</dbReference>
<dbReference type="EvolutionaryTrace" id="O75175"/>
<dbReference type="GeneWiki" id="CNOT3"/>
<dbReference type="GenomeRNAi" id="4849"/>
<dbReference type="Pharos" id="O75175">
    <property type="development level" value="Tbio"/>
</dbReference>
<dbReference type="PRO" id="PR:O75175"/>
<dbReference type="Proteomes" id="UP000005640">
    <property type="component" value="Chromosome 19"/>
</dbReference>
<dbReference type="RNAct" id="O75175">
    <property type="molecule type" value="protein"/>
</dbReference>
<dbReference type="Bgee" id="ENSG00000088038">
    <property type="expression patterns" value="Expressed in sural nerve and 95 other cell types or tissues"/>
</dbReference>
<dbReference type="ExpressionAtlas" id="O75175">
    <property type="expression patterns" value="baseline and differential"/>
</dbReference>
<dbReference type="GO" id="GO:0030014">
    <property type="term" value="C:CCR4-NOT complex"/>
    <property type="evidence" value="ECO:0000314"/>
    <property type="project" value="UniProtKB"/>
</dbReference>
<dbReference type="GO" id="GO:0030015">
    <property type="term" value="C:CCR4-NOT core complex"/>
    <property type="evidence" value="ECO:0000318"/>
    <property type="project" value="GO_Central"/>
</dbReference>
<dbReference type="GO" id="GO:0005829">
    <property type="term" value="C:cytosol"/>
    <property type="evidence" value="ECO:0000304"/>
    <property type="project" value="Reactome"/>
</dbReference>
<dbReference type="GO" id="GO:0005634">
    <property type="term" value="C:nucleus"/>
    <property type="evidence" value="ECO:0007669"/>
    <property type="project" value="UniProtKB-SubCell"/>
</dbReference>
<dbReference type="GO" id="GO:0000932">
    <property type="term" value="C:P-body"/>
    <property type="evidence" value="ECO:0000250"/>
    <property type="project" value="UniProtKB"/>
</dbReference>
<dbReference type="GO" id="GO:0000289">
    <property type="term" value="P:nuclear-transcribed mRNA poly(A) tail shortening"/>
    <property type="evidence" value="ECO:0000318"/>
    <property type="project" value="GO_Central"/>
</dbReference>
<dbReference type="GO" id="GO:0120162">
    <property type="term" value="P:positive regulation of cold-induced thermogenesis"/>
    <property type="evidence" value="ECO:0000250"/>
    <property type="project" value="YuBioLab"/>
</dbReference>
<dbReference type="GO" id="GO:0006355">
    <property type="term" value="P:regulation of DNA-templated transcription"/>
    <property type="evidence" value="ECO:0007669"/>
    <property type="project" value="InterPro"/>
</dbReference>
<dbReference type="GO" id="GO:2000036">
    <property type="term" value="P:regulation of stem cell population maintenance"/>
    <property type="evidence" value="ECO:0000315"/>
    <property type="project" value="UniProtKB"/>
</dbReference>
<dbReference type="GO" id="GO:0006417">
    <property type="term" value="P:regulation of translation"/>
    <property type="evidence" value="ECO:0007669"/>
    <property type="project" value="UniProtKB-KW"/>
</dbReference>
<dbReference type="GO" id="GO:0031047">
    <property type="term" value="P:regulatory ncRNA-mediated gene silencing"/>
    <property type="evidence" value="ECO:0007669"/>
    <property type="project" value="UniProtKB-KW"/>
</dbReference>
<dbReference type="GO" id="GO:0001829">
    <property type="term" value="P:trophectodermal cell differentiation"/>
    <property type="evidence" value="ECO:0007669"/>
    <property type="project" value="Ensembl"/>
</dbReference>
<dbReference type="FunFam" id="2.30.30.1020:FF:000002">
    <property type="entry name" value="CCR4-NOT transcription complex subunit 3"/>
    <property type="match status" value="1"/>
</dbReference>
<dbReference type="Gene3D" id="2.30.30.1020">
    <property type="entry name" value="CCR4-NOT complex subunit 2/3/5, C-terminal domain"/>
    <property type="match status" value="1"/>
</dbReference>
<dbReference type="IDEAL" id="IID00434"/>
<dbReference type="InterPro" id="IPR038635">
    <property type="entry name" value="CCR4-NOT_su2/3/5_C_sf"/>
</dbReference>
<dbReference type="InterPro" id="IPR012270">
    <property type="entry name" value="CCR4-NOT_su3/5"/>
</dbReference>
<dbReference type="InterPro" id="IPR040168">
    <property type="entry name" value="Not2/3/5"/>
</dbReference>
<dbReference type="InterPro" id="IPR007282">
    <property type="entry name" value="NOT2/3/5_C"/>
</dbReference>
<dbReference type="InterPro" id="IPR007207">
    <property type="entry name" value="Not_N"/>
</dbReference>
<dbReference type="PANTHER" id="PTHR23326">
    <property type="entry name" value="CCR4 NOT-RELATED"/>
    <property type="match status" value="1"/>
</dbReference>
<dbReference type="Pfam" id="PF04153">
    <property type="entry name" value="NOT2_3_5_C"/>
    <property type="match status" value="1"/>
</dbReference>
<dbReference type="Pfam" id="PF04065">
    <property type="entry name" value="Not3"/>
    <property type="match status" value="1"/>
</dbReference>
<dbReference type="PIRSF" id="PIRSF005290">
    <property type="entry name" value="NOT_su_3_5"/>
    <property type="match status" value="1"/>
</dbReference>
<proteinExistence type="evidence at protein level"/>
<comment type="function">
    <text evidence="6 9 10">Component of the CCR4-NOT complex which is one of the major cellular mRNA deadenylases and is linked to various cellular processes including bulk mRNA degradation, miRNA-mediated repression, translational repression during translational initiation and general transcription regulation. Additional complex functions may be a consequence of its influence on mRNA expression. May be involved in metabolic regulation; may be involved in recruitment of the CCR4-NOT complex to deadenylation target mRNAs involved in energy metabolism. Involved in mitotic progression and regulation of the spindle assembly checkpoint by regulating the stability of MAD1L1 mRNA. Can repress transcription and may link the CCR4-NOT complex to transcriptional regulation; the repressive function may involve histone deacetylases. Involved in the maintenance of embryonic stem (ES) cell identity.</text>
</comment>
<comment type="subunit">
    <text evidence="2 4 5 7 8 11">Component of the CCR4-NOT complex; distinct complexes seem to exist that differ in the participation of probably mutually exclusive catalytic subunits. In the complex interacts directly with CNOT2. Interacts with TIP120B and NANOS2. Interacts with EBF1. Interacts in an RNA-independent manner with BICC1 (via KH domains) (By similarity).</text>
</comment>
<comment type="interaction">
    <interactant intactId="EBI-743073">
        <id>O75175</id>
    </interactant>
    <interactant intactId="EBI-1049597">
        <id>P27797</id>
        <label>CALR</label>
    </interactant>
    <organismsDiffer>false</organismsDiffer>
    <experiments>3</experiments>
</comment>
<comment type="interaction">
    <interactant intactId="EBI-743073">
        <id>O75175</id>
    </interactant>
    <interactant intactId="EBI-1222758">
        <id>A5YKK6</id>
        <label>CNOT1</label>
    </interactant>
    <organismsDiffer>false</organismsDiffer>
    <experiments>4</experiments>
</comment>
<comment type="interaction">
    <interactant intactId="EBI-743073">
        <id>O75175</id>
    </interactant>
    <interactant intactId="EBI-743033">
        <id>Q9NZN8</id>
        <label>CNOT2</label>
    </interactant>
    <organismsDiffer>false</organismsDiffer>
    <experiments>12</experiments>
</comment>
<comment type="interaction">
    <interactant intactId="EBI-743073">
        <id>O75175</id>
    </interactant>
    <interactant intactId="EBI-2104530">
        <id>Q9ULM6</id>
        <label>CNOT6</label>
    </interactant>
    <organismsDiffer>false</organismsDiffer>
    <experiments>3</experiments>
</comment>
<comment type="interaction">
    <interactant intactId="EBI-743073">
        <id>O75175</id>
    </interactant>
    <interactant intactId="EBI-1046635">
        <id>Q96LI5</id>
        <label>CNOT6L</label>
    </interactant>
    <organismsDiffer>false</organismsDiffer>
    <experiments>4</experiments>
</comment>
<comment type="interaction">
    <interactant intactId="EBI-743073">
        <id>O75175</id>
    </interactant>
    <interactant intactId="EBI-742299">
        <id>Q9UFF9</id>
        <label>CNOT8</label>
    </interactant>
    <organismsDiffer>false</organismsDiffer>
    <experiments>5</experiments>
</comment>
<comment type="interaction">
    <interactant intactId="EBI-743073">
        <id>O75175</id>
    </interactant>
    <interactant intactId="EBI-351007">
        <id>P36957</id>
        <label>DLST</label>
    </interactant>
    <organismsDiffer>false</organismsDiffer>
    <experiments>3</experiments>
</comment>
<comment type="interaction">
    <interactant intactId="EBI-743073">
        <id>O75175</id>
    </interactant>
    <interactant intactId="EBI-1055945">
        <id>Q8TDX7</id>
        <label>NEK7</label>
    </interactant>
    <organismsDiffer>false</organismsDiffer>
    <experiments>3</experiments>
</comment>
<comment type="interaction">
    <interactant intactId="EBI-743073">
        <id>O75175</id>
    </interactant>
    <interactant intactId="EBI-716404">
        <id>P16284</id>
        <label>PECAM1</label>
    </interactant>
    <organismsDiffer>false</organismsDiffer>
    <experiments>3</experiments>
</comment>
<comment type="interaction">
    <interactant intactId="EBI-743073">
        <id>O75175</id>
    </interactant>
    <interactant intactId="EBI-6507625">
        <id>Q9HCJ0</id>
        <label>TNRC6C</label>
    </interactant>
    <organismsDiffer>false</organismsDiffer>
    <experiments>4</experiments>
</comment>
<comment type="interaction">
    <interactant intactId="EBI-743073">
        <id>O75175</id>
    </interactant>
    <interactant intactId="EBI-723281">
        <id>P50616</id>
        <label>TOB1</label>
    </interactant>
    <organismsDiffer>false</organismsDiffer>
    <experiments>5</experiments>
</comment>
<comment type="interaction">
    <interactant intactId="EBI-743073">
        <id>O75175</id>
    </interactant>
    <interactant intactId="EBI-355164">
        <id>P55072</id>
        <label>VCP</label>
    </interactant>
    <organismsDiffer>false</organismsDiffer>
    <experiments>3</experiments>
</comment>
<comment type="interaction">
    <interactant intactId="EBI-743073">
        <id>O75175</id>
    </interactant>
    <interactant intactId="EBI-6504831">
        <id>Q6ZQ73</id>
        <label>Cand2</label>
    </interactant>
    <organismsDiffer>true</organismsDiffer>
    <experiments>3</experiments>
</comment>
<comment type="subcellular location">
    <subcellularLocation>
        <location evidence="13">Cytoplasm</location>
    </subcellularLocation>
    <subcellularLocation>
        <location evidence="13">Nucleus</location>
    </subcellularLocation>
    <subcellularLocation>
        <location evidence="1">Cytoplasm</location>
        <location evidence="1">P-body</location>
    </subcellularLocation>
    <text evidence="1">NANOS2 promotes its localization to P-body.</text>
</comment>
<comment type="tissue specificity">
    <text evidence="4">Ubiquitous. Highly expressed in brain, heart, thymus, spleen, kidney, liver, small intestine, lung and peripheral blood leukocytes.</text>
</comment>
<comment type="developmental stage">
    <text evidence="10">Expressed in embryonic stem (ES) cells.</text>
</comment>
<comment type="disease" evidence="12">
    <disease id="DI-05707">
        <name>Intellectual developmental disorder with speech delay, autism and dysmorphic facies</name>
        <acronym>IDDSADF</acronym>
        <description>An autosomal dominant disorder characterized by mild to severe intellectual disability, developmental delay, delayed or absent speech, hypotonia, short stature, autistic features, and highly variable dysmorphic facial features.</description>
        <dbReference type="MIM" id="618672"/>
    </disease>
    <text>The disease is caused by variants affecting the gene represented in this entry.</text>
</comment>
<comment type="similarity">
    <text evidence="13">Belongs to the CNOT2/3/5 family.</text>
</comment>
<comment type="sequence caution" evidence="13">
    <conflict type="miscellaneous discrepancy">
        <sequence resource="EMBL-CDS" id="AAF29828"/>
    </conflict>
    <text>Seems to have an artifactual loop-out at the 3'-end deleting 2 full exons and part of 2 others.</text>
</comment>
<comment type="sequence caution" evidence="13">
    <conflict type="erroneous initiation">
        <sequence resource="EMBL-CDS" id="BAA31666"/>
    </conflict>
    <text>Extended N-terminus.</text>
</comment>
<comment type="sequence caution" evidence="13">
    <conflict type="erroneous translation">
        <sequence resource="EMBL-CDS" id="CAB63766"/>
    </conflict>
    <text>Wrong choice of frame.</text>
</comment>
<gene>
    <name evidence="14" type="primary">CNOT3</name>
    <name type="synonym">KIAA0691</name>
    <name type="synonym">LENG2</name>
    <name type="synonym">NOT3</name>
</gene>
<accession>O75175</accession>
<accession>Q9NZN7</accession>
<accession>Q9UF76</accession>
<name>CNOT3_HUMAN</name>
<keyword id="KW-0002">3D-structure</keyword>
<keyword id="KW-0963">Cytoplasm</keyword>
<keyword id="KW-0217">Developmental protein</keyword>
<keyword id="KW-0225">Disease variant</keyword>
<keyword id="KW-0991">Intellectual disability</keyword>
<keyword id="KW-0539">Nucleus</keyword>
<keyword id="KW-0597">Phosphoprotein</keyword>
<keyword id="KW-1267">Proteomics identification</keyword>
<keyword id="KW-1185">Reference proteome</keyword>
<keyword id="KW-0678">Repressor</keyword>
<keyword id="KW-0943">RNA-mediated gene silencing</keyword>
<keyword id="KW-0804">Transcription</keyword>
<keyword id="KW-0805">Transcription regulation</keyword>
<keyword id="KW-0810">Translation regulation</keyword>
<evidence type="ECO:0000250" key="1"/>
<evidence type="ECO:0000250" key="2">
    <source>
        <dbReference type="UniProtKB" id="Q8K0V4"/>
    </source>
</evidence>
<evidence type="ECO:0000256" key="3">
    <source>
        <dbReference type="SAM" id="MobiDB-lite"/>
    </source>
</evidence>
<evidence type="ECO:0000269" key="4">
    <source>
    </source>
</evidence>
<evidence type="ECO:0000269" key="5">
    <source>
    </source>
</evidence>
<evidence type="ECO:0000269" key="6">
    <source>
    </source>
</evidence>
<evidence type="ECO:0000269" key="7">
    <source>
    </source>
</evidence>
<evidence type="ECO:0000269" key="8">
    <source>
    </source>
</evidence>
<evidence type="ECO:0000269" key="9">
    <source>
    </source>
</evidence>
<evidence type="ECO:0000269" key="10">
    <source>
    </source>
</evidence>
<evidence type="ECO:0000269" key="11">
    <source>
    </source>
</evidence>
<evidence type="ECO:0000269" key="12">
    <source>
    </source>
</evidence>
<evidence type="ECO:0000305" key="13"/>
<evidence type="ECO:0000312" key="14">
    <source>
        <dbReference type="HGNC" id="HGNC:7879"/>
    </source>
</evidence>
<evidence type="ECO:0007744" key="15">
    <source>
    </source>
</evidence>
<evidence type="ECO:0007744" key="16">
    <source>
    </source>
</evidence>
<evidence type="ECO:0007744" key="17">
    <source>
    </source>
</evidence>
<evidence type="ECO:0007829" key="18">
    <source>
        <dbReference type="PDB" id="4C0G"/>
    </source>
</evidence>
<evidence type="ECO:0007829" key="19">
    <source>
        <dbReference type="PDB" id="5FU6"/>
    </source>
</evidence>
<evidence type="ECO:0007829" key="20">
    <source>
        <dbReference type="PDB" id="9C3I"/>
    </source>
</evidence>
<reference key="1">
    <citation type="journal article" date="1998" name="DNA Res.">
        <title>Prediction of the coding sequences of unidentified human genes. X. The complete sequences of 100 new cDNA clones from brain which can code for large proteins in vitro.</title>
        <authorList>
            <person name="Ishikawa K."/>
            <person name="Nagase T."/>
            <person name="Suyama M."/>
            <person name="Miyajima N."/>
            <person name="Tanaka A."/>
            <person name="Kotani H."/>
            <person name="Nomura N."/>
            <person name="Ohara O."/>
        </authorList>
    </citation>
    <scope>NUCLEOTIDE SEQUENCE [LARGE SCALE MRNA]</scope>
    <source>
        <tissue>Brain</tissue>
    </source>
</reference>
<reference key="2">
    <citation type="journal article" date="2004" name="Genome Res.">
        <title>The status, quality, and expansion of the NIH full-length cDNA project: the Mammalian Gene Collection (MGC).</title>
        <authorList>
            <consortium name="The MGC Project Team"/>
        </authorList>
    </citation>
    <scope>NUCLEOTIDE SEQUENCE [LARGE SCALE MRNA]</scope>
    <source>
        <tissue>Brain</tissue>
    </source>
</reference>
<reference key="3">
    <citation type="journal article" date="2000" name="Nucleic Acids Res.">
        <title>Isolation and characterization of human orthologs of yeast CCR4-NOT complex subunits.</title>
        <authorList>
            <person name="Albert T.K."/>
            <person name="Lemaire M."/>
            <person name="van Berkum N.L."/>
            <person name="Gentz R."/>
            <person name="Collart M.A."/>
            <person name="Timmers H.T.M."/>
        </authorList>
    </citation>
    <scope>NUCLEOTIDE SEQUENCE [MRNA] OF 1-607</scope>
    <scope>INTERACTION WITH CNOT8</scope>
    <scope>TISSUE SPECIFICITY</scope>
</reference>
<reference key="4">
    <citation type="journal article" date="2007" name="BMC Genomics">
        <title>The full-ORF clone resource of the German cDNA consortium.</title>
        <authorList>
            <person name="Bechtel S."/>
            <person name="Rosenfelder H."/>
            <person name="Duda A."/>
            <person name="Schmidt C.P."/>
            <person name="Ernst U."/>
            <person name="Wellenreuther R."/>
            <person name="Mehrle A."/>
            <person name="Schuster C."/>
            <person name="Bahr A."/>
            <person name="Bloecker H."/>
            <person name="Heubner D."/>
            <person name="Hoerlein A."/>
            <person name="Michel G."/>
            <person name="Wedler H."/>
            <person name="Koehrer K."/>
            <person name="Ottenwaelder B."/>
            <person name="Poustka A."/>
            <person name="Wiemann S."/>
            <person name="Schupp I."/>
        </authorList>
    </citation>
    <scope>NUCLEOTIDE SEQUENCE [LARGE SCALE MRNA] OF 83-161</scope>
    <source>
        <tissue>Testis</tissue>
    </source>
</reference>
<reference key="5">
    <citation type="journal article" date="2002" name="Biochem. Biophys. Res. Commun.">
        <title>TBP-interacting protein 120B, which is induced in relation to myogenesis, binds to NOT3.</title>
        <authorList>
            <person name="Aoki T."/>
            <person name="Okada N."/>
            <person name="Wakamatsu T."/>
            <person name="Tamura T.-A."/>
        </authorList>
    </citation>
    <scope>INTERACTION WITH TIP120B</scope>
</reference>
<reference key="6">
    <citation type="journal article" date="2004" name="J. Biol. Chem.">
        <title>Repression of promoter activity by CNOT2, a subunit of the transcription regulatory Ccr4-not complex.</title>
        <authorList>
            <person name="Zwartjes C.G."/>
            <person name="Jayne S."/>
            <person name="van den Berg D.L."/>
            <person name="Timmers H.T."/>
        </authorList>
    </citation>
    <scope>FUNCTION</scope>
    <scope>DOMAIN</scope>
</reference>
<reference key="7">
    <citation type="journal article" date="2008" name="Mol. Cell">
        <title>Kinase-selective enrichment enables quantitative phosphoproteomics of the kinome across the cell cycle.</title>
        <authorList>
            <person name="Daub H."/>
            <person name="Olsen J.V."/>
            <person name="Bairlein M."/>
            <person name="Gnad F."/>
            <person name="Oppermann F.S."/>
            <person name="Korner R."/>
            <person name="Greff Z."/>
            <person name="Keri G."/>
            <person name="Stemmann O."/>
            <person name="Mann M."/>
        </authorList>
    </citation>
    <scope>IDENTIFICATION BY MASS SPECTROMETRY [LARGE SCALE ANALYSIS]</scope>
    <source>
        <tissue>Cervix carcinoma</tissue>
    </source>
</reference>
<reference key="8">
    <citation type="journal article" date="2008" name="Proc. Natl. Acad. Sci. U.S.A.">
        <title>A quantitative atlas of mitotic phosphorylation.</title>
        <authorList>
            <person name="Dephoure N."/>
            <person name="Zhou C."/>
            <person name="Villen J."/>
            <person name="Beausoleil S.A."/>
            <person name="Bakalarski C.E."/>
            <person name="Elledge S.J."/>
            <person name="Gygi S.P."/>
        </authorList>
    </citation>
    <scope>PHOSPHORYLATION [LARGE SCALE ANALYSIS] AT THR-292</scope>
    <scope>IDENTIFICATION BY MASS SPECTROMETRY [LARGE SCALE ANALYSIS]</scope>
    <source>
        <tissue>Cervix carcinoma</tissue>
    </source>
</reference>
<reference key="9">
    <citation type="journal article" date="2009" name="Biochem. J.">
        <title>Human Ccr4-Not complexes contain variable deadenylase subunits.</title>
        <authorList>
            <person name="Lau N.C."/>
            <person name="Kolkman A."/>
            <person name="van Schaik F.M."/>
            <person name="Mulder K.W."/>
            <person name="Pijnappel W.W."/>
            <person name="Heck A.J."/>
            <person name="Timmers H.T."/>
        </authorList>
    </citation>
    <scope>IDENTIFICATION IN THE CCR4-NOT COMPLEX</scope>
    <scope>COMPOSITION OF THE CCR4-NOT COMPLEX</scope>
</reference>
<reference key="10">
    <citation type="journal article" date="2011" name="BMC Syst. Biol.">
        <title>Initial characterization of the human central proteome.</title>
        <authorList>
            <person name="Burkard T.R."/>
            <person name="Planyavsky M."/>
            <person name="Kaupe I."/>
            <person name="Breitwieser F.P."/>
            <person name="Buerckstuemmer T."/>
            <person name="Bennett K.L."/>
            <person name="Superti-Furga G."/>
            <person name="Colinge J."/>
        </authorList>
    </citation>
    <scope>IDENTIFICATION BY MASS SPECTROMETRY [LARGE SCALE ANALYSIS]</scope>
</reference>
<reference key="11">
    <citation type="journal article" date="2011" name="Genes Cells">
        <title>CNOT2 depletion disrupts and inhibits the CCR4-NOT deadenylase complex and induces apoptotic cell death.</title>
        <authorList>
            <person name="Ito K."/>
            <person name="Inoue T."/>
            <person name="Yokoyama K."/>
            <person name="Morita M."/>
            <person name="Suzuki T."/>
            <person name="Yamamoto T."/>
        </authorList>
    </citation>
    <scope>INTERACTION WITH CNOT2</scope>
</reference>
<reference key="12">
    <citation type="journal article" date="2011" name="Sci. Signal.">
        <title>System-wide temporal characterization of the proteome and phosphoproteome of human embryonic stem cell differentiation.</title>
        <authorList>
            <person name="Rigbolt K.T."/>
            <person name="Prokhorova T.A."/>
            <person name="Akimov V."/>
            <person name="Henningsen J."/>
            <person name="Johansen P.T."/>
            <person name="Kratchmarova I."/>
            <person name="Kassem M."/>
            <person name="Mann M."/>
            <person name="Olsen J.V."/>
            <person name="Blagoev B."/>
        </authorList>
    </citation>
    <scope>PHOSPHORYLATION [LARGE SCALE ANALYSIS] AT SER-299</scope>
    <scope>IDENTIFICATION BY MASS SPECTROMETRY [LARGE SCALE ANALYSIS]</scope>
</reference>
<reference key="13">
    <citation type="journal article" date="2012" name="Biochem. Biophys. Res. Commun.">
        <title>Involvement of CNOT3 in mitotic progression through inhibition of MAD1 expression.</title>
        <authorList>
            <person name="Takahashi A."/>
            <person name="Kikuguchi C."/>
            <person name="Morita M."/>
            <person name="Shimodaira T."/>
            <person name="Tokai-Nishizumi N."/>
            <person name="Yokoyama K."/>
            <person name="Ohsugi M."/>
            <person name="Suzuki T."/>
            <person name="Yamamoto T."/>
        </authorList>
    </citation>
    <scope>FUNCTION</scope>
</reference>
<reference key="14">
    <citation type="journal article" date="2012" name="Stem Cells">
        <title>Cnot1, Cnot2, and Cnot3 maintain mouse and human ESC identity and inhibit extraembryonic differentiation.</title>
        <authorList>
            <person name="Zheng X."/>
            <person name="Dumitru R."/>
            <person name="Lackford B.L."/>
            <person name="Freudenberg J.M."/>
            <person name="Singh A.P."/>
            <person name="Archer T.K."/>
            <person name="Jothi R."/>
            <person name="Hu G."/>
        </authorList>
    </citation>
    <scope>FUNCTION</scope>
    <scope>DEVELOPMENTAL STAGE</scope>
</reference>
<reference key="15">
    <citation type="journal article" date="2014" name="J. Proteomics">
        <title>An enzyme assisted RP-RPLC approach for in-depth analysis of human liver phosphoproteome.</title>
        <authorList>
            <person name="Bian Y."/>
            <person name="Song C."/>
            <person name="Cheng K."/>
            <person name="Dong M."/>
            <person name="Wang F."/>
            <person name="Huang J."/>
            <person name="Sun D."/>
            <person name="Wang L."/>
            <person name="Ye M."/>
            <person name="Zou H."/>
        </authorList>
    </citation>
    <scope>PHOSPHORYLATION [LARGE SCALE ANALYSIS] AT SER-542</scope>
    <scope>IDENTIFICATION BY MASS SPECTROMETRY [LARGE SCALE ANALYSIS]</scope>
    <source>
        <tissue>Liver</tissue>
    </source>
</reference>
<reference key="16">
    <citation type="journal article" date="2016" name="Genes Dev.">
        <title>Interaction of CCR4-NOT with EBF1 regulates gene-specific transcription and mRNA stability in B lymphopoiesis.</title>
        <authorList>
            <person name="Yang C.Y."/>
            <person name="Ramamoorthy S."/>
            <person name="Boller S."/>
            <person name="Rosenbaum M."/>
            <person name="Rodriguez Gil A."/>
            <person name="Mittler G."/>
            <person name="Imai Y."/>
            <person name="Kuba K."/>
            <person name="Grosschedl R."/>
        </authorList>
    </citation>
    <scope>INTERACTION WITH EBF1</scope>
</reference>
<reference key="17">
    <citation type="journal article" date="2019" name="Eur. J. Hum. Genet.">
        <title>De novo variants in CNOT3 cause a variable neurodevelopmental disorder.</title>
        <authorList>
            <person name="Martin R."/>
            <person name="Splitt M."/>
            <person name="Genevieve D."/>
            <person name="Aten E."/>
            <person name="Collins A."/>
            <person name="de Bie C.I."/>
            <person name="Faivre L."/>
            <person name="Foulds N."/>
            <person name="Giltay J."/>
            <person name="Ibitoye R."/>
            <person name="Joss S."/>
            <person name="Kennedy J."/>
            <person name="Kerr B."/>
            <person name="Kivuva E."/>
            <person name="Koopmans M."/>
            <person name="Newbury-Ecob R."/>
            <person name="Jean-Marcais N."/>
            <person name="Peeters E.A.J."/>
            <person name="Smithson S."/>
            <person name="Tomkins S."/>
            <person name="Tranmauthem F."/>
            <person name="Piton A."/>
            <person name="van Haeringen A."/>
        </authorList>
    </citation>
    <scope>INVOLVEMENT IN IDDSADF</scope>
    <scope>VARIANTS IDDSADF GLN-20; VAL-48; GLU-119; LYS-147; CYS-188; HIS-188; 622-TRP--GLN-753 DEL; 694-GLN--GLN-753 DEL AND GLN-697</scope>
</reference>
<protein>
    <recommendedName>
        <fullName evidence="13">CCR4-NOT transcription complex subunit 3</fullName>
    </recommendedName>
    <alternativeName>
        <fullName>CCR4-associated factor 3</fullName>
    </alternativeName>
    <alternativeName>
        <fullName>Leukocyte receptor cluster member 2</fullName>
    </alternativeName>
</protein>